<keyword id="KW-0249">Electron transport</keyword>
<keyword id="KW-0472">Membrane</keyword>
<keyword id="KW-0496">Mitochondrion</keyword>
<keyword id="KW-0999">Mitochondrion inner membrane</keyword>
<keyword id="KW-1185">Reference proteome</keyword>
<keyword id="KW-0679">Respiratory chain</keyword>
<keyword id="KW-0813">Transport</keyword>
<evidence type="ECO:0000250" key="1">
    <source>
        <dbReference type="UniProtKB" id="P00128"/>
    </source>
</evidence>
<evidence type="ECO:0000305" key="2"/>
<accession>Q6BNQ5</accession>
<dbReference type="EMBL" id="CR382137">
    <property type="protein sequence ID" value="CAG88438.1"/>
    <property type="molecule type" value="Genomic_DNA"/>
</dbReference>
<dbReference type="RefSeq" id="XP_460165.1">
    <property type="nucleotide sequence ID" value="XM_460165.1"/>
</dbReference>
<dbReference type="SMR" id="Q6BNQ5"/>
<dbReference type="FunCoup" id="Q6BNQ5">
    <property type="interactions" value="234"/>
</dbReference>
<dbReference type="STRING" id="284592.Q6BNQ5"/>
<dbReference type="GeneID" id="2903024"/>
<dbReference type="KEGG" id="dha:DEHA2E19756g"/>
<dbReference type="VEuPathDB" id="FungiDB:DEHA2E19756g"/>
<dbReference type="eggNOG" id="KOG3440">
    <property type="taxonomic scope" value="Eukaryota"/>
</dbReference>
<dbReference type="HOGENOM" id="CLU_115154_1_0_1"/>
<dbReference type="InParanoid" id="Q6BNQ5"/>
<dbReference type="OMA" id="MAKWEAN"/>
<dbReference type="OrthoDB" id="425749at2759"/>
<dbReference type="Proteomes" id="UP000000599">
    <property type="component" value="Chromosome E"/>
</dbReference>
<dbReference type="GO" id="GO:0099617">
    <property type="term" value="C:matrix side of mitochondrial inner membrane"/>
    <property type="evidence" value="ECO:0007669"/>
    <property type="project" value="EnsemblFungi"/>
</dbReference>
<dbReference type="GO" id="GO:0045275">
    <property type="term" value="C:respiratory chain complex III"/>
    <property type="evidence" value="ECO:0007669"/>
    <property type="project" value="EnsemblFungi"/>
</dbReference>
<dbReference type="GO" id="GO:0008121">
    <property type="term" value="F:ubiquinol-cytochrome-c reductase activity"/>
    <property type="evidence" value="ECO:0007669"/>
    <property type="project" value="EnsemblFungi"/>
</dbReference>
<dbReference type="GO" id="GO:0006122">
    <property type="term" value="P:mitochondrial electron transport, ubiquinol to cytochrome c"/>
    <property type="evidence" value="ECO:0007669"/>
    <property type="project" value="EnsemblFungi"/>
</dbReference>
<dbReference type="GO" id="GO:0034551">
    <property type="term" value="P:mitochondrial respiratory chain complex III assembly"/>
    <property type="evidence" value="ECO:0007669"/>
    <property type="project" value="EnsemblFungi"/>
</dbReference>
<dbReference type="FunFam" id="1.10.1090.10:FF:000001">
    <property type="entry name" value="Cytochrome b-c1 complex subunit 7"/>
    <property type="match status" value="1"/>
</dbReference>
<dbReference type="Gene3D" id="1.10.1090.10">
    <property type="entry name" value="Cytochrome b-c1 complex subunit 7"/>
    <property type="match status" value="1"/>
</dbReference>
<dbReference type="InterPro" id="IPR003197">
    <property type="entry name" value="QCR7"/>
</dbReference>
<dbReference type="InterPro" id="IPR036544">
    <property type="entry name" value="QCR7_sf"/>
</dbReference>
<dbReference type="PANTHER" id="PTHR12022:SF0">
    <property type="entry name" value="CYTOCHROME B-C1 COMPLEX SUBUNIT 7"/>
    <property type="match status" value="1"/>
</dbReference>
<dbReference type="PANTHER" id="PTHR12022">
    <property type="entry name" value="UBIQUINOL-CYTOCHROME C REDUCTASE COMPLEX 14 KD PROTEIN"/>
    <property type="match status" value="1"/>
</dbReference>
<dbReference type="Pfam" id="PF02271">
    <property type="entry name" value="UCR_14kD"/>
    <property type="match status" value="1"/>
</dbReference>
<dbReference type="PIRSF" id="PIRSF000022">
    <property type="entry name" value="Bc1_14K"/>
    <property type="match status" value="1"/>
</dbReference>
<dbReference type="SUPFAM" id="SSF81524">
    <property type="entry name" value="14 kDa protein of cytochrome bc1 complex (Ubiquinol-cytochrome c reductase)"/>
    <property type="match status" value="1"/>
</dbReference>
<proteinExistence type="inferred from homology"/>
<reference key="1">
    <citation type="journal article" date="2004" name="Nature">
        <title>Genome evolution in yeasts.</title>
        <authorList>
            <person name="Dujon B."/>
            <person name="Sherman D."/>
            <person name="Fischer G."/>
            <person name="Durrens P."/>
            <person name="Casaregola S."/>
            <person name="Lafontaine I."/>
            <person name="de Montigny J."/>
            <person name="Marck C."/>
            <person name="Neuveglise C."/>
            <person name="Talla E."/>
            <person name="Goffard N."/>
            <person name="Frangeul L."/>
            <person name="Aigle M."/>
            <person name="Anthouard V."/>
            <person name="Babour A."/>
            <person name="Barbe V."/>
            <person name="Barnay S."/>
            <person name="Blanchin S."/>
            <person name="Beckerich J.-M."/>
            <person name="Beyne E."/>
            <person name="Bleykasten C."/>
            <person name="Boisrame A."/>
            <person name="Boyer J."/>
            <person name="Cattolico L."/>
            <person name="Confanioleri F."/>
            <person name="de Daruvar A."/>
            <person name="Despons L."/>
            <person name="Fabre E."/>
            <person name="Fairhead C."/>
            <person name="Ferry-Dumazet H."/>
            <person name="Groppi A."/>
            <person name="Hantraye F."/>
            <person name="Hennequin C."/>
            <person name="Jauniaux N."/>
            <person name="Joyet P."/>
            <person name="Kachouri R."/>
            <person name="Kerrest A."/>
            <person name="Koszul R."/>
            <person name="Lemaire M."/>
            <person name="Lesur I."/>
            <person name="Ma L."/>
            <person name="Muller H."/>
            <person name="Nicaud J.-M."/>
            <person name="Nikolski M."/>
            <person name="Oztas S."/>
            <person name="Ozier-Kalogeropoulos O."/>
            <person name="Pellenz S."/>
            <person name="Potier S."/>
            <person name="Richard G.-F."/>
            <person name="Straub M.-L."/>
            <person name="Suleau A."/>
            <person name="Swennen D."/>
            <person name="Tekaia F."/>
            <person name="Wesolowski-Louvel M."/>
            <person name="Westhof E."/>
            <person name="Wirth B."/>
            <person name="Zeniou-Meyer M."/>
            <person name="Zivanovic Y."/>
            <person name="Bolotin-Fukuhara M."/>
            <person name="Thierry A."/>
            <person name="Bouchier C."/>
            <person name="Caudron B."/>
            <person name="Scarpelli C."/>
            <person name="Gaillardin C."/>
            <person name="Weissenbach J."/>
            <person name="Wincker P."/>
            <person name="Souciet J.-L."/>
        </authorList>
    </citation>
    <scope>NUCLEOTIDE SEQUENCE [LARGE SCALE GENOMIC DNA]</scope>
    <source>
        <strain>ATCC 36239 / CBS 767 / BCRC 21394 / JCM 1990 / NBRC 0083 / IGC 2968</strain>
    </source>
</reference>
<comment type="function">
    <text evidence="1">Component of the ubiquinol-cytochrome c oxidoreductase, a multisubunit transmembrane complex that is part of the mitochondrial electron transport chain which drives oxidative phosphorylation. The respiratory chain contains 3 multisubunit complexes succinate dehydrogenase (complex II, CII), ubiquinol-cytochrome c oxidoreductase (cytochrome b-c1 complex, complex III, CIII) and cytochrome c oxidase (complex IV, CIV), that cooperate to transfer electrons derived from NADH and succinate to molecular oxygen, creating an electrochemical gradient over the inner membrane that drives transmembrane transport and the ATP synthase. The cytochrome b-c1 complex catalyzes electron transfer from ubiquinol to cytochrome c, linking this redox reaction to translocation of protons across the mitochondrial inner membrane, with protons being carried across the membrane as hydrogens on the quinol. In the process called Q cycle, 2 protons are consumed from the matrix, 4 protons are released into the intermembrane space and 2 electrons are passed to cytochrome c.</text>
</comment>
<comment type="subunit">
    <text evidence="1">Component of the ubiquinol-cytochrome c oxidoreductase (cytochrome b-c1 complex, complex III, CIII), a multisubunit enzyme composed of 3 respiratory subunits cytochrome b, cytochrome c1 and Rieske protein, 2 core protein subunits, and additional low-molecular weight protein subunits. The complex exists as an obligatory dimer and forms supercomplexes (SCs) in the inner mitochondrial membrane with cytochrome c oxidase (complex IV, CIV).</text>
</comment>
<comment type="subcellular location">
    <subcellularLocation>
        <location evidence="1">Mitochondrion inner membrane</location>
        <topology evidence="1">Peripheral membrane protein</topology>
        <orientation evidence="1">Matrix side</orientation>
    </subcellularLocation>
</comment>
<comment type="similarity">
    <text evidence="2">Belongs to the UQCRB/QCR7 family.</text>
</comment>
<sequence>MASITSIVKTADYILSRPVLSKVVSPVAKAFVAYAGYREMGLKFNDLLIEETPVMQKAISRLPDEEIYARNYRFITAHQCSLSHQLLPANQAVKPEEDTHYLVPYILEAEKEAFERAELDNIEVPN</sequence>
<protein>
    <recommendedName>
        <fullName>Cytochrome b-c1 complex subunit 7</fullName>
    </recommendedName>
    <alternativeName>
        <fullName>Complex III subunit 7</fullName>
    </alternativeName>
    <alternativeName>
        <fullName>Complex III subunit VII</fullName>
    </alternativeName>
    <alternativeName>
        <fullName>Ubiquinol-cytochrome c reductase complex 14 kDa protein</fullName>
    </alternativeName>
</protein>
<organism>
    <name type="scientific">Debaryomyces hansenii (strain ATCC 36239 / CBS 767 / BCRC 21394 / JCM 1990 / NBRC 0083 / IGC 2968)</name>
    <name type="common">Yeast</name>
    <name type="synonym">Torulaspora hansenii</name>
    <dbReference type="NCBI Taxonomy" id="284592"/>
    <lineage>
        <taxon>Eukaryota</taxon>
        <taxon>Fungi</taxon>
        <taxon>Dikarya</taxon>
        <taxon>Ascomycota</taxon>
        <taxon>Saccharomycotina</taxon>
        <taxon>Pichiomycetes</taxon>
        <taxon>Debaryomycetaceae</taxon>
        <taxon>Debaryomyces</taxon>
    </lineage>
</organism>
<gene>
    <name type="primary">QCR7</name>
    <name type="ordered locus">DEHA2E19756g</name>
</gene>
<name>QCR7_DEBHA</name>
<feature type="chain" id="PRO_0000193533" description="Cytochrome b-c1 complex subunit 7">
    <location>
        <begin position="1"/>
        <end position="126"/>
    </location>
</feature>